<protein>
    <recommendedName>
        <fullName evidence="1">Thymidylate synthase</fullName>
        <shortName evidence="1">TS</shortName>
        <shortName evidence="1">TSase</shortName>
        <ecNumber evidence="1">2.1.1.45</ecNumber>
    </recommendedName>
</protein>
<evidence type="ECO:0000255" key="1">
    <source>
        <dbReference type="HAMAP-Rule" id="MF_00008"/>
    </source>
</evidence>
<keyword id="KW-0963">Cytoplasm</keyword>
<keyword id="KW-0489">Methyltransferase</keyword>
<keyword id="KW-0545">Nucleotide biosynthesis</keyword>
<keyword id="KW-0808">Transferase</keyword>
<name>TYSY_STAA1</name>
<dbReference type="EC" id="2.1.1.45" evidence="1"/>
<dbReference type="EMBL" id="AP009324">
    <property type="protein sequence ID" value="BAF78298.1"/>
    <property type="molecule type" value="Genomic_DNA"/>
</dbReference>
<dbReference type="RefSeq" id="WP_000934894.1">
    <property type="nucleotide sequence ID" value="NC_009782.1"/>
</dbReference>
<dbReference type="SMR" id="A7X2B3"/>
<dbReference type="KEGG" id="saw:SAHV_1415"/>
<dbReference type="HOGENOM" id="CLU_021669_0_2_9"/>
<dbReference type="UniPathway" id="UPA00575"/>
<dbReference type="GO" id="GO:0005829">
    <property type="term" value="C:cytosol"/>
    <property type="evidence" value="ECO:0007669"/>
    <property type="project" value="TreeGrafter"/>
</dbReference>
<dbReference type="GO" id="GO:0004799">
    <property type="term" value="F:thymidylate synthase activity"/>
    <property type="evidence" value="ECO:0007669"/>
    <property type="project" value="UniProtKB-UniRule"/>
</dbReference>
<dbReference type="GO" id="GO:0006231">
    <property type="term" value="P:dTMP biosynthetic process"/>
    <property type="evidence" value="ECO:0007669"/>
    <property type="project" value="UniProtKB-UniRule"/>
</dbReference>
<dbReference type="GO" id="GO:0006235">
    <property type="term" value="P:dTTP biosynthetic process"/>
    <property type="evidence" value="ECO:0007669"/>
    <property type="project" value="UniProtKB-UniRule"/>
</dbReference>
<dbReference type="GO" id="GO:0032259">
    <property type="term" value="P:methylation"/>
    <property type="evidence" value="ECO:0007669"/>
    <property type="project" value="UniProtKB-KW"/>
</dbReference>
<dbReference type="CDD" id="cd00351">
    <property type="entry name" value="TS_Pyrimidine_HMase"/>
    <property type="match status" value="1"/>
</dbReference>
<dbReference type="Gene3D" id="3.30.572.10">
    <property type="entry name" value="Thymidylate synthase/dCMP hydroxymethylase domain"/>
    <property type="match status" value="1"/>
</dbReference>
<dbReference type="HAMAP" id="MF_00008">
    <property type="entry name" value="Thymidy_synth_bact"/>
    <property type="match status" value="1"/>
</dbReference>
<dbReference type="InterPro" id="IPR045097">
    <property type="entry name" value="Thymidate_synth/dCMP_Mease"/>
</dbReference>
<dbReference type="InterPro" id="IPR023451">
    <property type="entry name" value="Thymidate_synth/dCMP_Mease_dom"/>
</dbReference>
<dbReference type="InterPro" id="IPR036926">
    <property type="entry name" value="Thymidate_synth/dCMP_Mease_sf"/>
</dbReference>
<dbReference type="InterPro" id="IPR000398">
    <property type="entry name" value="Thymidylate_synthase"/>
</dbReference>
<dbReference type="InterPro" id="IPR020940">
    <property type="entry name" value="Thymidylate_synthase_AS"/>
</dbReference>
<dbReference type="NCBIfam" id="NF002496">
    <property type="entry name" value="PRK01827.1-2"/>
    <property type="match status" value="1"/>
</dbReference>
<dbReference type="NCBIfam" id="TIGR03284">
    <property type="entry name" value="thym_sym"/>
    <property type="match status" value="1"/>
</dbReference>
<dbReference type="PANTHER" id="PTHR11548:SF9">
    <property type="entry name" value="THYMIDYLATE SYNTHASE"/>
    <property type="match status" value="1"/>
</dbReference>
<dbReference type="PANTHER" id="PTHR11548">
    <property type="entry name" value="THYMIDYLATE SYNTHASE 1"/>
    <property type="match status" value="1"/>
</dbReference>
<dbReference type="Pfam" id="PF00303">
    <property type="entry name" value="Thymidylat_synt"/>
    <property type="match status" value="1"/>
</dbReference>
<dbReference type="PRINTS" id="PR00108">
    <property type="entry name" value="THYMDSNTHASE"/>
</dbReference>
<dbReference type="SUPFAM" id="SSF55831">
    <property type="entry name" value="Thymidylate synthase/dCMP hydroxymethylase"/>
    <property type="match status" value="1"/>
</dbReference>
<dbReference type="PROSITE" id="PS00091">
    <property type="entry name" value="THYMIDYLATE_SYNTHASE"/>
    <property type="match status" value="1"/>
</dbReference>
<comment type="function">
    <text evidence="1">Catalyzes the reductive methylation of 2'-deoxyuridine-5'-monophosphate (dUMP) to 2'-deoxythymidine-5'-monophosphate (dTMP) while utilizing 5,10-methylenetetrahydrofolate (mTHF) as the methyl donor and reductant in the reaction, yielding dihydrofolate (DHF) as a by-product. This enzymatic reaction provides an intracellular de novo source of dTMP, an essential precursor for DNA biosynthesis.</text>
</comment>
<comment type="catalytic activity">
    <reaction evidence="1">
        <text>dUMP + (6R)-5,10-methylene-5,6,7,8-tetrahydrofolate = 7,8-dihydrofolate + dTMP</text>
        <dbReference type="Rhea" id="RHEA:12104"/>
        <dbReference type="ChEBI" id="CHEBI:15636"/>
        <dbReference type="ChEBI" id="CHEBI:57451"/>
        <dbReference type="ChEBI" id="CHEBI:63528"/>
        <dbReference type="ChEBI" id="CHEBI:246422"/>
        <dbReference type="EC" id="2.1.1.45"/>
    </reaction>
</comment>
<comment type="pathway">
    <text evidence="1">Pyrimidine metabolism; dTTP biosynthesis.</text>
</comment>
<comment type="subunit">
    <text evidence="1">Homodimer.</text>
</comment>
<comment type="subcellular location">
    <subcellularLocation>
        <location evidence="1">Cytoplasm</location>
    </subcellularLocation>
</comment>
<comment type="similarity">
    <text evidence="1">Belongs to the thymidylate synthase family. Bacterial-type ThyA subfamily.</text>
</comment>
<proteinExistence type="inferred from homology"/>
<organism>
    <name type="scientific">Staphylococcus aureus (strain Mu3 / ATCC 700698)</name>
    <dbReference type="NCBI Taxonomy" id="418127"/>
    <lineage>
        <taxon>Bacteria</taxon>
        <taxon>Bacillati</taxon>
        <taxon>Bacillota</taxon>
        <taxon>Bacilli</taxon>
        <taxon>Bacillales</taxon>
        <taxon>Staphylococcaceae</taxon>
        <taxon>Staphylococcus</taxon>
    </lineage>
</organism>
<accession>A7X2B3</accession>
<gene>
    <name evidence="1" type="primary">thyA</name>
    <name type="ordered locus">SAHV_1415</name>
</gene>
<reference key="1">
    <citation type="journal article" date="2008" name="Antimicrob. Agents Chemother.">
        <title>Mutated response regulator graR is responsible for phenotypic conversion of Staphylococcus aureus from heterogeneous vancomycin-intermediate resistance to vancomycin-intermediate resistance.</title>
        <authorList>
            <person name="Neoh H.-M."/>
            <person name="Cui L."/>
            <person name="Yuzawa H."/>
            <person name="Takeuchi F."/>
            <person name="Matsuo M."/>
            <person name="Hiramatsu K."/>
        </authorList>
    </citation>
    <scope>NUCLEOTIDE SEQUENCE [LARGE SCALE GENOMIC DNA]</scope>
    <source>
        <strain>Mu3 / ATCC 700698</strain>
    </source>
</reference>
<feature type="chain" id="PRO_1000000685" description="Thymidylate synthase">
    <location>
        <begin position="1"/>
        <end position="318"/>
    </location>
</feature>
<feature type="active site" description="Nucleophile" evidence="1">
    <location>
        <position position="201"/>
    </location>
</feature>
<feature type="binding site" description="in other chain" evidence="1">
    <location>
        <position position="26"/>
    </location>
    <ligand>
        <name>dUMP</name>
        <dbReference type="ChEBI" id="CHEBI:246422"/>
        <note>ligand shared between dimeric partners</note>
    </ligand>
</feature>
<feature type="binding site" evidence="1">
    <location>
        <begin position="181"/>
        <end position="182"/>
    </location>
    <ligand>
        <name>dUMP</name>
        <dbReference type="ChEBI" id="CHEBI:246422"/>
        <note>ligand shared between dimeric partners</note>
    </ligand>
</feature>
<feature type="binding site" description="in other chain" evidence="1">
    <location>
        <begin position="221"/>
        <end position="224"/>
    </location>
    <ligand>
        <name>dUMP</name>
        <dbReference type="ChEBI" id="CHEBI:246422"/>
        <note>ligand shared between dimeric partners</note>
    </ligand>
</feature>
<feature type="binding site" evidence="1">
    <location>
        <position position="224"/>
    </location>
    <ligand>
        <name>(6R)-5,10-methylene-5,6,7,8-tetrahydrofolate</name>
        <dbReference type="ChEBI" id="CHEBI:15636"/>
    </ligand>
</feature>
<feature type="binding site" description="in other chain" evidence="1">
    <location>
        <position position="232"/>
    </location>
    <ligand>
        <name>dUMP</name>
        <dbReference type="ChEBI" id="CHEBI:246422"/>
        <note>ligand shared between dimeric partners</note>
    </ligand>
</feature>
<feature type="binding site" description="in other chain" evidence="1">
    <location>
        <begin position="262"/>
        <end position="264"/>
    </location>
    <ligand>
        <name>dUMP</name>
        <dbReference type="ChEBI" id="CHEBI:246422"/>
        <note>ligand shared between dimeric partners</note>
    </ligand>
</feature>
<feature type="binding site" evidence="1">
    <location>
        <position position="317"/>
    </location>
    <ligand>
        <name>(6R)-5,10-methylene-5,6,7,8-tetrahydrofolate</name>
        <dbReference type="ChEBI" id="CHEBI:15636"/>
    </ligand>
</feature>
<sequence length="318" mass="36825">MLNSFDAAYHSLCEEVLEIGNTRNDRTNTGTISKFGHQLRFDLSKGFPLLTTKKVSFKLVATELLWFIKGDTNIQYLLKYNNNIWNEWAFENYIKSDEYNGPDMTDFGHRALSDPEFNEQYKEQMKQFKQRILEDDTFAKQFGDLGNVYGKQWRDWVDKDGNHFDQLKTVIEQIKHNPDSRRHIVSAWNPTEIDTMALPPCHTMFQFYVQDGKLSCQLYQRSADIFLGVPFNIASYALLTHLIAKECGLEVGEFVHTFGDAHIYSNHIDAIQTQLARESFNPPTLKINSDKSIFDINYEDLEIVDYESHPAIKAPIAV</sequence>